<organism>
    <name type="scientific">Clavibacter michiganensis subsp. michiganensis (strain NCPPB 382)</name>
    <dbReference type="NCBI Taxonomy" id="443906"/>
    <lineage>
        <taxon>Bacteria</taxon>
        <taxon>Bacillati</taxon>
        <taxon>Actinomycetota</taxon>
        <taxon>Actinomycetes</taxon>
        <taxon>Micrococcales</taxon>
        <taxon>Microbacteriaceae</taxon>
        <taxon>Clavibacter</taxon>
    </lineage>
</organism>
<keyword id="KW-1003">Cell membrane</keyword>
<keyword id="KW-0406">Ion transport</keyword>
<keyword id="KW-0472">Membrane</keyword>
<keyword id="KW-0630">Potassium</keyword>
<keyword id="KW-0633">Potassium transport</keyword>
<keyword id="KW-0812">Transmembrane</keyword>
<keyword id="KW-1133">Transmembrane helix</keyword>
<keyword id="KW-0813">Transport</keyword>
<reference key="1">
    <citation type="journal article" date="2008" name="J. Bacteriol.">
        <title>The genome sequence of the tomato-pathogenic actinomycete Clavibacter michiganensis subsp. michiganensis NCPPB382 reveals a large island involved in pathogenicity.</title>
        <authorList>
            <person name="Gartemann K.-H."/>
            <person name="Abt B."/>
            <person name="Bekel T."/>
            <person name="Burger A."/>
            <person name="Engemann J."/>
            <person name="Fluegel M."/>
            <person name="Gaigalat L."/>
            <person name="Goesmann A."/>
            <person name="Graefen I."/>
            <person name="Kalinowski J."/>
            <person name="Kaup O."/>
            <person name="Kirchner O."/>
            <person name="Krause L."/>
            <person name="Linke B."/>
            <person name="McHardy A."/>
            <person name="Meyer F."/>
            <person name="Pohle S."/>
            <person name="Rueckert C."/>
            <person name="Schneiker S."/>
            <person name="Zellermann E.-M."/>
            <person name="Puehler A."/>
            <person name="Eichenlaub R."/>
            <person name="Kaiser O."/>
            <person name="Bartels D."/>
        </authorList>
    </citation>
    <scope>NUCLEOTIDE SEQUENCE [LARGE SCALE GENOMIC DNA]</scope>
    <source>
        <strain>NCPPB 382</strain>
    </source>
</reference>
<gene>
    <name evidence="1" type="primary">kdpA</name>
    <name type="ordered locus">CMM_2751</name>
</gene>
<proteinExistence type="inferred from homology"/>
<comment type="function">
    <text evidence="1">Part of the high-affinity ATP-driven potassium transport (or Kdp) system, which catalyzes the hydrolysis of ATP coupled with the electrogenic transport of potassium into the cytoplasm. This subunit binds the extracellular potassium ions and delivers the ions to the membrane domain of KdpB through an intramembrane tunnel.</text>
</comment>
<comment type="subunit">
    <text evidence="1">The system is composed of three essential subunits: KdpA, KdpB and KdpC.</text>
</comment>
<comment type="subcellular location">
    <subcellularLocation>
        <location evidence="1">Cell membrane</location>
        <topology evidence="1">Multi-pass membrane protein</topology>
    </subcellularLocation>
</comment>
<comment type="similarity">
    <text evidence="1">Belongs to the KdpA family.</text>
</comment>
<accession>A5CUP8</accession>
<dbReference type="EMBL" id="AM711867">
    <property type="protein sequence ID" value="CAN02835.1"/>
    <property type="molecule type" value="Genomic_DNA"/>
</dbReference>
<dbReference type="RefSeq" id="WP_012039440.1">
    <property type="nucleotide sequence ID" value="NC_009480.1"/>
</dbReference>
<dbReference type="SMR" id="A5CUP8"/>
<dbReference type="KEGG" id="cmi:CMM_2751"/>
<dbReference type="eggNOG" id="COG2060">
    <property type="taxonomic scope" value="Bacteria"/>
</dbReference>
<dbReference type="HOGENOM" id="CLU_018614_3_0_11"/>
<dbReference type="OrthoDB" id="9763796at2"/>
<dbReference type="Proteomes" id="UP000001564">
    <property type="component" value="Chromosome"/>
</dbReference>
<dbReference type="GO" id="GO:0005886">
    <property type="term" value="C:plasma membrane"/>
    <property type="evidence" value="ECO:0007669"/>
    <property type="project" value="UniProtKB-SubCell"/>
</dbReference>
<dbReference type="GO" id="GO:0008556">
    <property type="term" value="F:P-type potassium transmembrane transporter activity"/>
    <property type="evidence" value="ECO:0007669"/>
    <property type="project" value="InterPro"/>
</dbReference>
<dbReference type="GO" id="GO:0030955">
    <property type="term" value="F:potassium ion binding"/>
    <property type="evidence" value="ECO:0007669"/>
    <property type="project" value="UniProtKB-UniRule"/>
</dbReference>
<dbReference type="HAMAP" id="MF_00275">
    <property type="entry name" value="KdpA"/>
    <property type="match status" value="1"/>
</dbReference>
<dbReference type="InterPro" id="IPR004623">
    <property type="entry name" value="KdpA"/>
</dbReference>
<dbReference type="NCBIfam" id="TIGR00680">
    <property type="entry name" value="kdpA"/>
    <property type="match status" value="1"/>
</dbReference>
<dbReference type="PANTHER" id="PTHR30607">
    <property type="entry name" value="POTASSIUM-TRANSPORTING ATPASE A CHAIN"/>
    <property type="match status" value="1"/>
</dbReference>
<dbReference type="PANTHER" id="PTHR30607:SF2">
    <property type="entry name" value="POTASSIUM-TRANSPORTING ATPASE POTASSIUM-BINDING SUBUNIT"/>
    <property type="match status" value="1"/>
</dbReference>
<dbReference type="Pfam" id="PF03814">
    <property type="entry name" value="KdpA"/>
    <property type="match status" value="1"/>
</dbReference>
<dbReference type="PIRSF" id="PIRSF001294">
    <property type="entry name" value="K_ATPaseA"/>
    <property type="match status" value="1"/>
</dbReference>
<sequence length="558" mass="58212">MDTLAGILQVASVVLVLVLIHRPLGDLMARMYESRHDSRVERGIYRLIGVDPRSEQTWPAYLRAVLAFSLVGVLVVYGLQRLQAFLPYALGLPAVPEGLSFNTAVSFVTNTNWQSYSPEATMGYTVQLAGLAVQNFVSAAVGIAVAIALVRGFARTRTGTIGNLWVDLIRGSLRLLLPLSLVTAVILIAGGVIQNFAGFQDVATLAGGSQTIPGGPVASQEAIKMLGTNGGGFFNANSAHPFEDPTAWTSAFQVILMLAIPFSLPRTFGKMVGDTRQGTAIVAVMATIFVVSFTALTIFELNGQGTAPMAAGGAMEGKEQRFGIIASTLFGSASTLTSTGAVNSMHDSYTALGGMMPMINMMLGEVAPGGTGSGLYGMLILAVISVFVAGLLVGRTPEYLGKKIGPREIKLASLYILVTPILVLVGTALSFAIPAVRDDVEGTSILNSGLHGLSEVVYAFTSAANNNGSAFAGLTASTPWFNTALGVAMLLGRFLPIVFVLALAGSLAAQDRIPTTSGTLPTHRPQFVGLLIGVTVIVTALTYFPVLALGPLAEGLAS</sequence>
<name>KDPA_CLAM3</name>
<protein>
    <recommendedName>
        <fullName evidence="1">Potassium-transporting ATPase potassium-binding subunit</fullName>
    </recommendedName>
    <alternativeName>
        <fullName evidence="1">ATP phosphohydrolase [potassium-transporting] A chain</fullName>
    </alternativeName>
    <alternativeName>
        <fullName evidence="1">Potassium-binding and translocating subunit A</fullName>
    </alternativeName>
    <alternativeName>
        <fullName evidence="1">Potassium-translocating ATPase A chain</fullName>
    </alternativeName>
</protein>
<feature type="chain" id="PRO_1000022216" description="Potassium-transporting ATPase potassium-binding subunit">
    <location>
        <begin position="1"/>
        <end position="558"/>
    </location>
</feature>
<feature type="transmembrane region" description="Helical" evidence="1">
    <location>
        <begin position="1"/>
        <end position="21"/>
    </location>
</feature>
<feature type="transmembrane region" description="Helical" evidence="1">
    <location>
        <begin position="59"/>
        <end position="79"/>
    </location>
</feature>
<feature type="transmembrane region" description="Helical" evidence="1">
    <location>
        <begin position="85"/>
        <end position="105"/>
    </location>
</feature>
<feature type="transmembrane region" description="Helical" evidence="1">
    <location>
        <begin position="130"/>
        <end position="150"/>
    </location>
</feature>
<feature type="transmembrane region" description="Helical" evidence="1">
    <location>
        <begin position="179"/>
        <end position="199"/>
    </location>
</feature>
<feature type="transmembrane region" description="Helical" evidence="1">
    <location>
        <begin position="245"/>
        <end position="265"/>
    </location>
</feature>
<feature type="transmembrane region" description="Helical" evidence="1">
    <location>
        <begin position="279"/>
        <end position="299"/>
    </location>
</feature>
<feature type="transmembrane region" description="Helical" evidence="1">
    <location>
        <begin position="374"/>
        <end position="394"/>
    </location>
</feature>
<feature type="transmembrane region" description="Helical" evidence="1">
    <location>
        <begin position="416"/>
        <end position="436"/>
    </location>
</feature>
<feature type="transmembrane region" description="Helical" evidence="1">
    <location>
        <begin position="484"/>
        <end position="504"/>
    </location>
</feature>
<feature type="transmembrane region" description="Helical" evidence="1">
    <location>
        <begin position="527"/>
        <end position="547"/>
    </location>
</feature>
<evidence type="ECO:0000255" key="1">
    <source>
        <dbReference type="HAMAP-Rule" id="MF_00275"/>
    </source>
</evidence>